<protein>
    <recommendedName>
        <fullName>Biotin--[acetyl-CoA-carboxylase] ligase</fullName>
        <ecNumber>6.3.4.15</ecNumber>
    </recommendedName>
    <alternativeName>
        <fullName>Biotin--protein ligase</fullName>
    </alternativeName>
    <alternativeName>
        <fullName>Biotin-[acetyl-CoA carboxylase] synthetase</fullName>
    </alternativeName>
</protein>
<reference key="1">
    <citation type="journal article" date="1993" name="Biochemistry">
        <title>DNA sequencing of the seven remaining structural genes of the gene cluster encoding the energy-transducing NADH-quinone oxidoreductase of Paracoccus denitrificans.</title>
        <authorList>
            <person name="Xu X."/>
            <person name="Matsuno-Yagi A."/>
            <person name="Yagi T."/>
        </authorList>
    </citation>
    <scope>NUCLEOTIDE SEQUENCE [GENOMIC DNA]</scope>
    <source>
        <strain>ATCC 13543 / NRRL B-3784 / NRC 449</strain>
    </source>
</reference>
<comment type="function">
    <text evidence="1">Activates biotin to form biotinyl-5'-adenylate and transfers the biotin moiety to biotin-accepting proteins.</text>
</comment>
<comment type="catalytic activity">
    <reaction>
        <text>biotin + L-lysyl-[protein] + ATP = N(6)-biotinyl-L-lysyl-[protein] + AMP + diphosphate + H(+)</text>
        <dbReference type="Rhea" id="RHEA:11756"/>
        <dbReference type="Rhea" id="RHEA-COMP:9752"/>
        <dbReference type="Rhea" id="RHEA-COMP:10505"/>
        <dbReference type="ChEBI" id="CHEBI:15378"/>
        <dbReference type="ChEBI" id="CHEBI:29969"/>
        <dbReference type="ChEBI" id="CHEBI:30616"/>
        <dbReference type="ChEBI" id="CHEBI:33019"/>
        <dbReference type="ChEBI" id="CHEBI:57586"/>
        <dbReference type="ChEBI" id="CHEBI:83144"/>
        <dbReference type="ChEBI" id="CHEBI:456215"/>
        <dbReference type="EC" id="6.3.4.15"/>
    </reaction>
</comment>
<comment type="similarity">
    <text evidence="3">Belongs to the biotin--protein ligase family.</text>
</comment>
<accession>P29906</accession>
<dbReference type="EC" id="6.3.4.15"/>
<dbReference type="EMBL" id="L02354">
    <property type="protein sequence ID" value="AAA25601.1"/>
    <property type="molecule type" value="Genomic_DNA"/>
</dbReference>
<dbReference type="PIR" id="B47751">
    <property type="entry name" value="B47751"/>
</dbReference>
<dbReference type="SMR" id="P29906"/>
<dbReference type="GO" id="GO:0005737">
    <property type="term" value="C:cytoplasm"/>
    <property type="evidence" value="ECO:0007669"/>
    <property type="project" value="TreeGrafter"/>
</dbReference>
<dbReference type="GO" id="GO:0005524">
    <property type="term" value="F:ATP binding"/>
    <property type="evidence" value="ECO:0007669"/>
    <property type="project" value="UniProtKB-KW"/>
</dbReference>
<dbReference type="GO" id="GO:0004077">
    <property type="term" value="F:biotin--[biotin carboxyl-carrier protein] ligase activity"/>
    <property type="evidence" value="ECO:0007669"/>
    <property type="project" value="UniProtKB-EC"/>
</dbReference>
<dbReference type="GO" id="GO:0036211">
    <property type="term" value="P:protein modification process"/>
    <property type="evidence" value="ECO:0007669"/>
    <property type="project" value="InterPro"/>
</dbReference>
<dbReference type="CDD" id="cd16442">
    <property type="entry name" value="BPL"/>
    <property type="match status" value="1"/>
</dbReference>
<dbReference type="Gene3D" id="3.30.930.10">
    <property type="entry name" value="Bira Bifunctional Protein, Domain 2"/>
    <property type="match status" value="1"/>
</dbReference>
<dbReference type="InterPro" id="IPR045864">
    <property type="entry name" value="aa-tRNA-synth_II/BPL/LPL"/>
</dbReference>
<dbReference type="InterPro" id="IPR004408">
    <property type="entry name" value="Biotin_CoA_COase_ligase"/>
</dbReference>
<dbReference type="InterPro" id="IPR003142">
    <property type="entry name" value="BPL_C"/>
</dbReference>
<dbReference type="InterPro" id="IPR004143">
    <property type="entry name" value="BPL_LPL_catalytic"/>
</dbReference>
<dbReference type="NCBIfam" id="TIGR00121">
    <property type="entry name" value="birA_ligase"/>
    <property type="match status" value="1"/>
</dbReference>
<dbReference type="PANTHER" id="PTHR12835">
    <property type="entry name" value="BIOTIN PROTEIN LIGASE"/>
    <property type="match status" value="1"/>
</dbReference>
<dbReference type="PANTHER" id="PTHR12835:SF5">
    <property type="entry name" value="BIOTIN--PROTEIN LIGASE"/>
    <property type="match status" value="1"/>
</dbReference>
<dbReference type="Pfam" id="PF02237">
    <property type="entry name" value="BPL_C"/>
    <property type="match status" value="1"/>
</dbReference>
<dbReference type="Pfam" id="PF03099">
    <property type="entry name" value="BPL_LplA_LipB"/>
    <property type="match status" value="1"/>
</dbReference>
<dbReference type="SUPFAM" id="SSF55681">
    <property type="entry name" value="Class II aaRS and biotin synthetases"/>
    <property type="match status" value="1"/>
</dbReference>
<dbReference type="PROSITE" id="PS51733">
    <property type="entry name" value="BPL_LPL_CATALYTIC"/>
    <property type="match status" value="1"/>
</dbReference>
<keyword id="KW-0067">ATP-binding</keyword>
<keyword id="KW-0092">Biotin</keyword>
<keyword id="KW-0436">Ligase</keyword>
<keyword id="KW-0547">Nucleotide-binding</keyword>
<feature type="chain" id="PRO_0000064934" description="Biotin--[acetyl-CoA-carboxylase] ligase">
    <location>
        <begin position="1"/>
        <end position="240"/>
    </location>
</feature>
<feature type="domain" description="BPL/LPL catalytic" evidence="2">
    <location>
        <begin position="1"/>
        <end position="176"/>
    </location>
</feature>
<feature type="binding site" evidence="1">
    <location>
        <begin position="7"/>
        <end position="9"/>
    </location>
    <ligand>
        <name>biotin</name>
        <dbReference type="ChEBI" id="CHEBI:57586"/>
    </ligand>
</feature>
<feature type="binding site" evidence="1">
    <location>
        <position position="30"/>
    </location>
    <ligand>
        <name>biotin</name>
        <dbReference type="ChEBI" id="CHEBI:57586"/>
    </ligand>
</feature>
<feature type="binding site" evidence="1">
    <location>
        <begin position="34"/>
        <end position="36"/>
    </location>
    <ligand>
        <name>biotin</name>
        <dbReference type="ChEBI" id="CHEBI:57586"/>
    </ligand>
</feature>
<feature type="binding site" evidence="1">
    <location>
        <position position="102"/>
    </location>
    <ligand>
        <name>biotin</name>
        <dbReference type="ChEBI" id="CHEBI:57586"/>
    </ligand>
</feature>
<name>BIRA_PARDE</name>
<evidence type="ECO:0000250" key="1"/>
<evidence type="ECO:0000255" key="2">
    <source>
        <dbReference type="PROSITE-ProRule" id="PRU01067"/>
    </source>
</evidence>
<evidence type="ECO:0000305" key="3"/>
<sequence>MLARTDSTNAEALKLAPGLSGSAWVLAREQFAGRGRRGREWVMPAGNFAGTLVLRPQGGALAAAQLSFVAALALYDALGLACGPAARLAIKWPNDVLLNGGKVAGILLESSGSGPGVQAVAVGIGVNLAGAPDAGAVEPGATPPVSVQGETGHAVDPEEFLDLLAPAFARWQAQLDTYGFAPIRNAWLARAARLGEPIIARTGTAESHGIFEGIDDSGALILRGPAGRQVIPAAEVFFGG</sequence>
<gene>
    <name type="primary">birA</name>
</gene>
<organism>
    <name type="scientific">Paracoccus denitrificans</name>
    <dbReference type="NCBI Taxonomy" id="266"/>
    <lineage>
        <taxon>Bacteria</taxon>
        <taxon>Pseudomonadati</taxon>
        <taxon>Pseudomonadota</taxon>
        <taxon>Alphaproteobacteria</taxon>
        <taxon>Rhodobacterales</taxon>
        <taxon>Paracoccaceae</taxon>
        <taxon>Paracoccus</taxon>
    </lineage>
</organism>
<proteinExistence type="inferred from homology"/>